<accession>A4GAG8</accession>
<name>ATPE_HERAR</name>
<proteinExistence type="inferred from homology"/>
<comment type="function">
    <text evidence="1">Produces ATP from ADP in the presence of a proton gradient across the membrane.</text>
</comment>
<comment type="subunit">
    <text evidence="1">F-type ATPases have 2 components, CF(1) - the catalytic core - and CF(0) - the membrane proton channel. CF(1) has five subunits: alpha(3), beta(3), gamma(1), delta(1), epsilon(1). CF(0) has three main subunits: a, b and c.</text>
</comment>
<comment type="subcellular location">
    <subcellularLocation>
        <location evidence="1">Cell inner membrane</location>
        <topology evidence="1">Peripheral membrane protein</topology>
    </subcellularLocation>
</comment>
<comment type="similarity">
    <text evidence="1">Belongs to the ATPase epsilon chain family.</text>
</comment>
<sequence length="140" mass="14938">MAHTMRVEVVSAEEEIFSGEAEFVALPGESGELGILPGHTPLITRIRPGAVRIKIAGQAEDEFVFVAGGILEVQPHGVTVLADTAIRGADLDEAKAAEAKRLAEEALVNKESKIDYAQAQAELATAIAQLAAIQRLRQKR</sequence>
<keyword id="KW-0066">ATP synthesis</keyword>
<keyword id="KW-0997">Cell inner membrane</keyword>
<keyword id="KW-1003">Cell membrane</keyword>
<keyword id="KW-0139">CF(1)</keyword>
<keyword id="KW-0375">Hydrogen ion transport</keyword>
<keyword id="KW-0406">Ion transport</keyword>
<keyword id="KW-0472">Membrane</keyword>
<keyword id="KW-1185">Reference proteome</keyword>
<keyword id="KW-0813">Transport</keyword>
<feature type="chain" id="PRO_1000056490" description="ATP synthase epsilon chain">
    <location>
        <begin position="1"/>
        <end position="140"/>
    </location>
</feature>
<reference key="1">
    <citation type="journal article" date="2007" name="PLoS Genet.">
        <title>A tale of two oxidation states: bacterial colonization of arsenic-rich environments.</title>
        <authorList>
            <person name="Muller D."/>
            <person name="Medigue C."/>
            <person name="Koechler S."/>
            <person name="Barbe V."/>
            <person name="Barakat M."/>
            <person name="Talla E."/>
            <person name="Bonnefoy V."/>
            <person name="Krin E."/>
            <person name="Arsene-Ploetze F."/>
            <person name="Carapito C."/>
            <person name="Chandler M."/>
            <person name="Cournoyer B."/>
            <person name="Cruveiller S."/>
            <person name="Dossat C."/>
            <person name="Duval S."/>
            <person name="Heymann M."/>
            <person name="Leize E."/>
            <person name="Lieutaud A."/>
            <person name="Lievremont D."/>
            <person name="Makita Y."/>
            <person name="Mangenot S."/>
            <person name="Nitschke W."/>
            <person name="Ortet P."/>
            <person name="Perdrial N."/>
            <person name="Schoepp B."/>
            <person name="Siguier P."/>
            <person name="Simeonova D.D."/>
            <person name="Rouy Z."/>
            <person name="Segurens B."/>
            <person name="Turlin E."/>
            <person name="Vallenet D."/>
            <person name="van Dorsselaer A."/>
            <person name="Weiss S."/>
            <person name="Weissenbach J."/>
            <person name="Lett M.-C."/>
            <person name="Danchin A."/>
            <person name="Bertin P.N."/>
        </authorList>
    </citation>
    <scope>NUCLEOTIDE SEQUENCE [LARGE SCALE GENOMIC DNA]</scope>
    <source>
        <strain>ULPAs1</strain>
    </source>
</reference>
<protein>
    <recommendedName>
        <fullName evidence="1">ATP synthase epsilon chain</fullName>
    </recommendedName>
    <alternativeName>
        <fullName evidence="1">ATP synthase F1 sector epsilon subunit</fullName>
    </alternativeName>
    <alternativeName>
        <fullName evidence="1">F-ATPase epsilon subunit</fullName>
    </alternativeName>
</protein>
<organism>
    <name type="scientific">Herminiimonas arsenicoxydans</name>
    <dbReference type="NCBI Taxonomy" id="204773"/>
    <lineage>
        <taxon>Bacteria</taxon>
        <taxon>Pseudomonadati</taxon>
        <taxon>Pseudomonadota</taxon>
        <taxon>Betaproteobacteria</taxon>
        <taxon>Burkholderiales</taxon>
        <taxon>Oxalobacteraceae</taxon>
        <taxon>Herminiimonas</taxon>
    </lineage>
</organism>
<gene>
    <name evidence="1" type="primary">atpC</name>
    <name type="ordered locus">HEAR3404</name>
</gene>
<dbReference type="EMBL" id="CU207211">
    <property type="protein sequence ID" value="CAL63505.1"/>
    <property type="molecule type" value="Genomic_DNA"/>
</dbReference>
<dbReference type="SMR" id="A4GAG8"/>
<dbReference type="STRING" id="204773.HEAR3404"/>
<dbReference type="KEGG" id="har:HEAR3404"/>
<dbReference type="eggNOG" id="COG0355">
    <property type="taxonomic scope" value="Bacteria"/>
</dbReference>
<dbReference type="HOGENOM" id="CLU_084338_2_0_4"/>
<dbReference type="OrthoDB" id="9791445at2"/>
<dbReference type="Proteomes" id="UP000006697">
    <property type="component" value="Chromosome"/>
</dbReference>
<dbReference type="GO" id="GO:0005886">
    <property type="term" value="C:plasma membrane"/>
    <property type="evidence" value="ECO:0007669"/>
    <property type="project" value="UniProtKB-SubCell"/>
</dbReference>
<dbReference type="GO" id="GO:0045259">
    <property type="term" value="C:proton-transporting ATP synthase complex"/>
    <property type="evidence" value="ECO:0007669"/>
    <property type="project" value="UniProtKB-KW"/>
</dbReference>
<dbReference type="GO" id="GO:0005524">
    <property type="term" value="F:ATP binding"/>
    <property type="evidence" value="ECO:0007669"/>
    <property type="project" value="UniProtKB-UniRule"/>
</dbReference>
<dbReference type="GO" id="GO:0046933">
    <property type="term" value="F:proton-transporting ATP synthase activity, rotational mechanism"/>
    <property type="evidence" value="ECO:0007669"/>
    <property type="project" value="UniProtKB-UniRule"/>
</dbReference>
<dbReference type="CDD" id="cd12152">
    <property type="entry name" value="F1-ATPase_delta"/>
    <property type="match status" value="1"/>
</dbReference>
<dbReference type="FunFam" id="1.20.5.440:FF:000001">
    <property type="entry name" value="ATP synthase epsilon chain"/>
    <property type="match status" value="1"/>
</dbReference>
<dbReference type="FunFam" id="2.60.15.10:FF:000001">
    <property type="entry name" value="ATP synthase epsilon chain"/>
    <property type="match status" value="1"/>
</dbReference>
<dbReference type="Gene3D" id="1.20.5.440">
    <property type="entry name" value="ATP synthase delta/epsilon subunit, C-terminal domain"/>
    <property type="match status" value="1"/>
</dbReference>
<dbReference type="Gene3D" id="2.60.15.10">
    <property type="entry name" value="F0F1 ATP synthase delta/epsilon subunit, N-terminal"/>
    <property type="match status" value="1"/>
</dbReference>
<dbReference type="HAMAP" id="MF_00530">
    <property type="entry name" value="ATP_synth_epsil_bac"/>
    <property type="match status" value="1"/>
</dbReference>
<dbReference type="InterPro" id="IPR036794">
    <property type="entry name" value="ATP_F1_dsu/esu_C_sf"/>
</dbReference>
<dbReference type="InterPro" id="IPR001469">
    <property type="entry name" value="ATP_synth_F1_dsu/esu"/>
</dbReference>
<dbReference type="InterPro" id="IPR020546">
    <property type="entry name" value="ATP_synth_F1_dsu/esu_N"/>
</dbReference>
<dbReference type="InterPro" id="IPR020547">
    <property type="entry name" value="ATP_synth_F1_esu_C"/>
</dbReference>
<dbReference type="InterPro" id="IPR036771">
    <property type="entry name" value="ATPsynth_dsu/esu_N"/>
</dbReference>
<dbReference type="NCBIfam" id="TIGR01216">
    <property type="entry name" value="ATP_synt_epsi"/>
    <property type="match status" value="1"/>
</dbReference>
<dbReference type="NCBIfam" id="NF001847">
    <property type="entry name" value="PRK00571.1-4"/>
    <property type="match status" value="1"/>
</dbReference>
<dbReference type="PANTHER" id="PTHR13822">
    <property type="entry name" value="ATP SYNTHASE DELTA/EPSILON CHAIN"/>
    <property type="match status" value="1"/>
</dbReference>
<dbReference type="PANTHER" id="PTHR13822:SF10">
    <property type="entry name" value="ATP SYNTHASE EPSILON CHAIN, CHLOROPLASTIC"/>
    <property type="match status" value="1"/>
</dbReference>
<dbReference type="Pfam" id="PF00401">
    <property type="entry name" value="ATP-synt_DE"/>
    <property type="match status" value="1"/>
</dbReference>
<dbReference type="Pfam" id="PF02823">
    <property type="entry name" value="ATP-synt_DE_N"/>
    <property type="match status" value="1"/>
</dbReference>
<dbReference type="SUPFAM" id="SSF46604">
    <property type="entry name" value="Epsilon subunit of F1F0-ATP synthase C-terminal domain"/>
    <property type="match status" value="1"/>
</dbReference>
<dbReference type="SUPFAM" id="SSF51344">
    <property type="entry name" value="Epsilon subunit of F1F0-ATP synthase N-terminal domain"/>
    <property type="match status" value="1"/>
</dbReference>
<evidence type="ECO:0000255" key="1">
    <source>
        <dbReference type="HAMAP-Rule" id="MF_00530"/>
    </source>
</evidence>